<feature type="chain" id="PRO_0000223648" description="Truncated formate dehydrogenase 2">
    <location>
        <begin position="1"/>
        <end position="236"/>
    </location>
</feature>
<feature type="binding site" evidence="1">
    <location>
        <begin position="36"/>
        <end position="37"/>
    </location>
    <ligand>
        <name>NAD(+)</name>
        <dbReference type="ChEBI" id="CHEBI:57540"/>
    </ligand>
</feature>
<feature type="binding site" evidence="1">
    <location>
        <position position="57"/>
    </location>
    <ligand>
        <name>NAD(+)</name>
        <dbReference type="ChEBI" id="CHEBI:57540"/>
    </ligand>
</feature>
<feature type="binding site" evidence="1">
    <location>
        <begin position="104"/>
        <end position="108"/>
    </location>
    <ligand>
        <name>NAD(+)</name>
        <dbReference type="ChEBI" id="CHEBI:57540"/>
    </ligand>
</feature>
<feature type="binding site" evidence="1">
    <location>
        <position position="130"/>
    </location>
    <ligand>
        <name>NAD(+)</name>
        <dbReference type="ChEBI" id="CHEBI:57540"/>
    </ligand>
</feature>
<feature type="binding site" evidence="1">
    <location>
        <position position="156"/>
    </location>
    <ligand>
        <name>NAD(+)</name>
        <dbReference type="ChEBI" id="CHEBI:57540"/>
    </ligand>
</feature>
<feature type="binding site" evidence="1">
    <location>
        <begin position="185"/>
        <end position="188"/>
    </location>
    <ligand>
        <name>NAD(+)</name>
        <dbReference type="ChEBI" id="CHEBI:57540"/>
    </ligand>
</feature>
<feature type="site" description="Important for catalytic activity" evidence="1">
    <location>
        <position position="132"/>
    </location>
</feature>
<feature type="site" description="Important for catalytic activity" evidence="1">
    <location>
        <position position="185"/>
    </location>
</feature>
<sequence>MVVINKQLMVSGILPAWLKNEYDLEDKIISTVGAGRIGYRVLERLVAFNPKKLLYYDYQELPAEAINRLNEASKLFNGRGDIVQRVEKLEDMVAQSDVVTINCPLHKDSRGLFNKKLISHMKDGAYLVNTARGAICVAEDVAEAVKSGKLAGYGGDVWDKQPAPKDHPWRTMDNKDHVGNAMTVHISGTSLHAQKRYAQGVKNILNSYFSKKFDYRPQDIIVQNGSYATRAYGQKK</sequence>
<dbReference type="EMBL" id="Z73632">
    <property type="protein sequence ID" value="CAA98013.1"/>
    <property type="molecule type" value="Genomic_DNA"/>
</dbReference>
<dbReference type="PIR" id="S65308">
    <property type="entry name" value="S65308"/>
</dbReference>
<dbReference type="SMR" id="P0CF35"/>
<dbReference type="DIP" id="DIP-3921N"/>
<dbReference type="AGR" id="SGD:S000006196"/>
<dbReference type="SGD" id="S000006196">
    <property type="gene designation" value="FDH2"/>
</dbReference>
<dbReference type="GO" id="GO:0051287">
    <property type="term" value="F:NAD binding"/>
    <property type="evidence" value="ECO:0007669"/>
    <property type="project" value="InterPro"/>
</dbReference>
<dbReference type="GO" id="GO:0016491">
    <property type="term" value="F:oxidoreductase activity"/>
    <property type="evidence" value="ECO:0007669"/>
    <property type="project" value="UniProtKB-KW"/>
</dbReference>
<dbReference type="FunFam" id="3.40.50.720:FF:000057">
    <property type="entry name" value="Formate dehydrogenase"/>
    <property type="match status" value="1"/>
</dbReference>
<dbReference type="FunFam" id="3.40.50.720:FF:000862">
    <property type="entry name" value="Formate dehydrogenase chloroplastic/mitochondrial"/>
    <property type="match status" value="1"/>
</dbReference>
<dbReference type="Gene3D" id="3.40.50.720">
    <property type="entry name" value="NAD(P)-binding Rossmann-like Domain"/>
    <property type="match status" value="1"/>
</dbReference>
<dbReference type="InterPro" id="IPR029753">
    <property type="entry name" value="D-isomer_DH_CS"/>
</dbReference>
<dbReference type="InterPro" id="IPR006140">
    <property type="entry name" value="D-isomer_DH_NAD-bd"/>
</dbReference>
<dbReference type="InterPro" id="IPR036291">
    <property type="entry name" value="NAD(P)-bd_dom_sf"/>
</dbReference>
<dbReference type="PANTHER" id="PTHR42938">
    <property type="entry name" value="FORMATE DEHYDROGENASE 1"/>
    <property type="match status" value="1"/>
</dbReference>
<dbReference type="PANTHER" id="PTHR42938:SF9">
    <property type="entry name" value="FORMATE DEHYDROGENASE 1"/>
    <property type="match status" value="1"/>
</dbReference>
<dbReference type="Pfam" id="PF02826">
    <property type="entry name" value="2-Hacid_dh_C"/>
    <property type="match status" value="1"/>
</dbReference>
<dbReference type="SUPFAM" id="SSF51735">
    <property type="entry name" value="NAD(P)-binding Rossmann-fold domains"/>
    <property type="match status" value="1"/>
</dbReference>
<dbReference type="PROSITE" id="PS00670">
    <property type="entry name" value="D_2_HYDROXYACID_DH_2"/>
    <property type="match status" value="1"/>
</dbReference>
<dbReference type="PROSITE" id="PS00671">
    <property type="entry name" value="D_2_HYDROXYACID_DH_3"/>
    <property type="match status" value="1"/>
</dbReference>
<organism>
    <name type="scientific">Saccharomyces cerevisiae (strain ATCC 204508 / S288c)</name>
    <name type="common">Baker's yeast</name>
    <dbReference type="NCBI Taxonomy" id="559292"/>
    <lineage>
        <taxon>Eukaryota</taxon>
        <taxon>Fungi</taxon>
        <taxon>Dikarya</taxon>
        <taxon>Ascomycota</taxon>
        <taxon>Saccharomycotina</taxon>
        <taxon>Saccharomycetes</taxon>
        <taxon>Saccharomycetales</taxon>
        <taxon>Saccharomycetaceae</taxon>
        <taxon>Saccharomyces</taxon>
    </lineage>
</organism>
<protein>
    <recommendedName>
        <fullName evidence="3">Truncated formate dehydrogenase 2</fullName>
    </recommendedName>
    <alternativeName>
        <fullName evidence="2">NAD-dependent formate dehydrogenase 2</fullName>
    </alternativeName>
</protein>
<accession>P0CF35</accession>
<accession>Q08987</accession>
<accession>Q08988</accession>
<reference key="1">
    <citation type="journal article" date="1997" name="Nature">
        <title>The nucleotide sequence of Saccharomyces cerevisiae chromosome XVI.</title>
        <authorList>
            <person name="Bussey H."/>
            <person name="Storms R.K."/>
            <person name="Ahmed A."/>
            <person name="Albermann K."/>
            <person name="Allen E."/>
            <person name="Ansorge W."/>
            <person name="Araujo R."/>
            <person name="Aparicio A."/>
            <person name="Barrell B.G."/>
            <person name="Badcock K."/>
            <person name="Benes V."/>
            <person name="Botstein D."/>
            <person name="Bowman S."/>
            <person name="Brueckner M."/>
            <person name="Carpenter J."/>
            <person name="Cherry J.M."/>
            <person name="Chung E."/>
            <person name="Churcher C.M."/>
            <person name="Coster F."/>
            <person name="Davis K."/>
            <person name="Davis R.W."/>
            <person name="Dietrich F.S."/>
            <person name="Delius H."/>
            <person name="DiPaolo T."/>
            <person name="Dubois E."/>
            <person name="Duesterhoeft A."/>
            <person name="Duncan M."/>
            <person name="Floeth M."/>
            <person name="Fortin N."/>
            <person name="Friesen J.D."/>
            <person name="Fritz C."/>
            <person name="Goffeau A."/>
            <person name="Hall J."/>
            <person name="Hebling U."/>
            <person name="Heumann K."/>
            <person name="Hilbert H."/>
            <person name="Hillier L.W."/>
            <person name="Hunicke-Smith S."/>
            <person name="Hyman R.W."/>
            <person name="Johnston M."/>
            <person name="Kalman S."/>
            <person name="Kleine K."/>
            <person name="Komp C."/>
            <person name="Kurdi O."/>
            <person name="Lashkari D."/>
            <person name="Lew H."/>
            <person name="Lin A."/>
            <person name="Lin D."/>
            <person name="Louis E.J."/>
            <person name="Marathe R."/>
            <person name="Messenguy F."/>
            <person name="Mewes H.-W."/>
            <person name="Mirtipati S."/>
            <person name="Moestl D."/>
            <person name="Mueller-Auer S."/>
            <person name="Namath A."/>
            <person name="Nentwich U."/>
            <person name="Oefner P."/>
            <person name="Pearson D."/>
            <person name="Petel F.X."/>
            <person name="Pohl T.M."/>
            <person name="Purnelle B."/>
            <person name="Rajandream M.A."/>
            <person name="Rechmann S."/>
            <person name="Rieger M."/>
            <person name="Riles L."/>
            <person name="Roberts D."/>
            <person name="Schaefer M."/>
            <person name="Scharfe M."/>
            <person name="Scherens B."/>
            <person name="Schramm S."/>
            <person name="Schroeder M."/>
            <person name="Sdicu A.-M."/>
            <person name="Tettelin H."/>
            <person name="Urrestarazu L.A."/>
            <person name="Ushinsky S."/>
            <person name="Vierendeels F."/>
            <person name="Vissers S."/>
            <person name="Voss H."/>
            <person name="Walsh S.V."/>
            <person name="Wambutt R."/>
            <person name="Wang Y."/>
            <person name="Wedler E."/>
            <person name="Wedler H."/>
            <person name="Winnett E."/>
            <person name="Zhong W.-W."/>
            <person name="Zollner A."/>
            <person name="Vo D.H."/>
            <person name="Hani J."/>
        </authorList>
    </citation>
    <scope>NUCLEOTIDE SEQUENCE [LARGE SCALE GENOMIC DNA]</scope>
    <source>
        <strain>ATCC 204508 / S288c</strain>
    </source>
</reference>
<reference key="2">
    <citation type="journal article" date="2014" name="G3 (Bethesda)">
        <title>The reference genome sequence of Saccharomyces cerevisiae: Then and now.</title>
        <authorList>
            <person name="Engel S.R."/>
            <person name="Dietrich F.S."/>
            <person name="Fisk D.G."/>
            <person name="Binkley G."/>
            <person name="Balakrishnan R."/>
            <person name="Costanzo M.C."/>
            <person name="Dwight S.S."/>
            <person name="Hitz B.C."/>
            <person name="Karra K."/>
            <person name="Nash R.S."/>
            <person name="Weng S."/>
            <person name="Wong E.D."/>
            <person name="Lloyd P."/>
            <person name="Skrzypek M.S."/>
            <person name="Miyasato S.R."/>
            <person name="Simison M."/>
            <person name="Cherry J.M."/>
        </authorList>
    </citation>
    <scope>GENOME REANNOTATION</scope>
    <source>
        <strain>ATCC 204508 / S288c</strain>
    </source>
</reference>
<reference key="3">
    <citation type="journal article" date="2002" name="Yeast">
        <title>Functional analysis of structural genes for NAD(+)-dependent formate dehydrogenase in Saccharomyces cerevisiae.</title>
        <authorList>
            <person name="Overkamp K.M."/>
            <person name="Koetter P."/>
            <person name="van der Hoek R."/>
            <person name="Schoondermark-Stolk S."/>
            <person name="Luttik M.A.H."/>
            <person name="van Dijken J.P."/>
            <person name="Pronk J.T."/>
        </authorList>
    </citation>
    <scope>NUCLEOTIDE SEQUENCE [GENOMIC DNA] OF 1-64</scope>
    <scope>CONFIRMATION OF STOP CODON</scope>
    <source>
        <strain>ATCC 200060 / W303</strain>
        <strain>ATCC 201388 / BY4741</strain>
    </source>
</reference>
<evidence type="ECO:0000250" key="1">
    <source>
        <dbReference type="UniProtKB" id="P33160"/>
    </source>
</evidence>
<evidence type="ECO:0000303" key="2">
    <source>
    </source>
</evidence>
<evidence type="ECO:0000305" key="3"/>
<evidence type="ECO:0000305" key="4">
    <source>
    </source>
</evidence>
<evidence type="ECO:0000305" key="5">
    <source>
    </source>
</evidence>
<evidence type="ECO:0000312" key="6">
    <source>
        <dbReference type="SGD" id="S000006196"/>
    </source>
</evidence>
<keyword id="KW-0520">NAD</keyword>
<keyword id="KW-0560">Oxidoreductase</keyword>
<proteinExistence type="uncertain"/>
<comment type="similarity">
    <text evidence="3">Belongs to the D-isomer specific 2-hydroxyacid dehydrogenase family. FDH subfamily.</text>
</comment>
<comment type="caution">
    <text evidence="4 5">Could be the product of a pseudogene unlikely to encode a functional protein. This is the C-terminal part of a second copy of formate dehydrogenase in the yeast genome. Strains BY4741, S288c and W303 have a stop codon in position 146, which disrupts the gene coding for this protein and produces two ORFs YPL275W and YPL276W. Because of that it is not part of the S.cerevisiae S288c complete/reference proteome set. A contiguous sequence for formate dehydrogenase 2 can be found in strain CEN.PK113-7D (AC P0CT22).</text>
</comment>
<name>FDH2_YEAST</name>
<gene>
    <name evidence="2" type="primary">FDH2</name>
    <name evidence="6" type="ordered locus">YPL275W</name>
    <name type="ORF">P0326</name>
</gene>